<sequence>MTTTTTNVTDLYPTRGATEVATPRQDPVVWGSPDAPGPVSAGDLQALDRDGFLAIDQLITPDEVGEYQRELERLTTDPAIRADERSIVEPQSKEIRSVFEVHKISEVFAKLVRDERVVGRARQILGSDVYVHQSRINVKPGFGASGFYWHSDFETWHAEDGLPNMRTISVSIALTENYDTNGGLMIMPGSHKTFLGCAGATPKDNYKKSLQMQDAGTPSDEGLTKMASEYGIKLFTGKAGSATWFDCNCMHGSGDNITPFPRSNVFIVFNSVENTAVEPFAAPIRRPEFIGARDFTPVK</sequence>
<reference key="1">
    <citation type="journal article" date="2002" name="Nature">
        <title>Complete genome sequence of the model actinomycete Streptomyces coelicolor A3(2).</title>
        <authorList>
            <person name="Bentley S.D."/>
            <person name="Chater K.F."/>
            <person name="Cerdeno-Tarraga A.-M."/>
            <person name="Challis G.L."/>
            <person name="Thomson N.R."/>
            <person name="James K.D."/>
            <person name="Harris D.E."/>
            <person name="Quail M.A."/>
            <person name="Kieser H."/>
            <person name="Harper D."/>
            <person name="Bateman A."/>
            <person name="Brown S."/>
            <person name="Chandra G."/>
            <person name="Chen C.W."/>
            <person name="Collins M."/>
            <person name="Cronin A."/>
            <person name="Fraser A."/>
            <person name="Goble A."/>
            <person name="Hidalgo J."/>
            <person name="Hornsby T."/>
            <person name="Howarth S."/>
            <person name="Huang C.-H."/>
            <person name="Kieser T."/>
            <person name="Larke L."/>
            <person name="Murphy L.D."/>
            <person name="Oliver K."/>
            <person name="O'Neil S."/>
            <person name="Rabbinowitsch E."/>
            <person name="Rajandream M.A."/>
            <person name="Rutherford K.M."/>
            <person name="Rutter S."/>
            <person name="Seeger K."/>
            <person name="Saunders D."/>
            <person name="Sharp S."/>
            <person name="Squares R."/>
            <person name="Squares S."/>
            <person name="Taylor K."/>
            <person name="Warren T."/>
            <person name="Wietzorrek A."/>
            <person name="Woodward J.R."/>
            <person name="Barrell B.G."/>
            <person name="Parkhill J."/>
            <person name="Hopwood D.A."/>
        </authorList>
    </citation>
    <scope>NUCLEOTIDE SEQUENCE [LARGE SCALE GENOMIC DNA]</scope>
    <source>
        <strain>ATCC BAA-471 / A3(2) / M145</strain>
    </source>
</reference>
<reference key="2">
    <citation type="journal article" date="2008" name="Appl. Environ. Microbiol.">
        <title>Synthesis and uptake of the compatible solutes ectoine and 5-hydroxyectoine by Streptomyces coelicolor A3(2) in response to salt and heat stresses.</title>
        <authorList>
            <person name="Bursy J."/>
            <person name="Kuhlmann A.U."/>
            <person name="Pittelkow M."/>
            <person name="Hartmann H."/>
            <person name="Jebbar M."/>
            <person name="Pierik A.J."/>
            <person name="Bremer E."/>
        </authorList>
    </citation>
    <scope>PROTEIN SEQUENCE OF 1-11</scope>
    <scope>FUNCTION</scope>
    <scope>CATALYTIC ACTIVITY</scope>
    <scope>BIOPHYSICOCHEMICAL PROPERTIES</scope>
    <source>
        <strain>ATCC BAA-471 / A3(2) / M145</strain>
    </source>
</reference>
<proteinExistence type="evidence at protein level"/>
<comment type="function">
    <text evidence="4">Involved in the biosynthesis of 5-hydroxyectoine, called compatible solute, which helps organisms to survive extreme osmotic stress by acting as a highly soluble organic osmolyte. Catalyzes the 2-oxoglutarate-dependent selective hydroxylation of L-ectoine to yield (4S,5S)-5-hydroxyectoine.</text>
</comment>
<comment type="catalytic activity">
    <reaction evidence="4">
        <text>L-ectoine + 2-oxoglutarate + O2 = 5-hydroxyectoine + succinate + CO2</text>
        <dbReference type="Rhea" id="RHEA:45740"/>
        <dbReference type="ChEBI" id="CHEBI:15379"/>
        <dbReference type="ChEBI" id="CHEBI:16526"/>
        <dbReference type="ChEBI" id="CHEBI:16810"/>
        <dbReference type="ChEBI" id="CHEBI:30031"/>
        <dbReference type="ChEBI" id="CHEBI:58515"/>
        <dbReference type="ChEBI" id="CHEBI:85413"/>
        <dbReference type="EC" id="1.14.11.55"/>
    </reaction>
</comment>
<comment type="cofactor">
    <cofactor evidence="2">
        <name>Fe(2+)</name>
        <dbReference type="ChEBI" id="CHEBI:29033"/>
    </cofactor>
    <text evidence="2">Binds 1 Fe(2+) ion.</text>
</comment>
<comment type="biophysicochemical properties">
    <kinetics>
        <KM evidence="4">2.6 mM for ectoine</KM>
        <KM evidence="4">6.2 mM for 2-oxoglutarate</KM>
        <Vmax evidence="4">20.0 umol/min/mg enzyme</Vmax>
    </kinetics>
    <phDependence>
        <text evidence="4">Optimum pH is 7.5.</text>
    </phDependence>
    <temperatureDependence>
        <text evidence="4">Optimum temperature is 32 degrees Celsius.</text>
    </temperatureDependence>
</comment>
<comment type="subunit">
    <text evidence="2">Homodimer.</text>
</comment>
<comment type="similarity">
    <text evidence="6">Belongs to the PhyH family. EctD subfamily.</text>
</comment>
<comment type="sequence caution" evidence="6">
    <conflict type="erroneous initiation">
        <sequence resource="EMBL-CDS" id="CAC38802"/>
    </conflict>
    <text>Truncated N-terminus.</text>
</comment>
<feature type="chain" id="PRO_0000215243" description="Ectoine dioxygenase">
    <location>
        <begin position="1"/>
        <end position="299"/>
    </location>
</feature>
<feature type="region of interest" description="Disordered" evidence="3">
    <location>
        <begin position="1"/>
        <end position="40"/>
    </location>
</feature>
<feature type="binding site" evidence="1">
    <location>
        <position position="133"/>
    </location>
    <ligand>
        <name>L-ectoine</name>
        <dbReference type="ChEBI" id="CHEBI:58515"/>
    </ligand>
</feature>
<feature type="binding site" evidence="1">
    <location>
        <position position="139"/>
    </location>
    <ligand>
        <name>2-oxoglutarate</name>
        <dbReference type="ChEBI" id="CHEBI:16810"/>
    </ligand>
</feature>
<feature type="binding site" evidence="2">
    <location>
        <position position="150"/>
    </location>
    <ligand>
        <name>Fe cation</name>
        <dbReference type="ChEBI" id="CHEBI:24875"/>
    </ligand>
</feature>
<feature type="binding site" evidence="2">
    <location>
        <position position="152"/>
    </location>
    <ligand>
        <name>Fe cation</name>
        <dbReference type="ChEBI" id="CHEBI:24875"/>
    </ligand>
</feature>
<feature type="binding site" evidence="2">
    <location>
        <position position="251"/>
    </location>
    <ligand>
        <name>Fe cation</name>
        <dbReference type="ChEBI" id="CHEBI:24875"/>
    </ligand>
</feature>
<feature type="site" description="Important for ectoine stabilization" evidence="1">
    <location>
        <position position="156"/>
    </location>
</feature>
<dbReference type="EC" id="1.14.11.55" evidence="4"/>
<dbReference type="EMBL" id="AL939110">
    <property type="protein sequence ID" value="CAC38802.1"/>
    <property type="status" value="ALT_INIT"/>
    <property type="molecule type" value="Genomic_DNA"/>
</dbReference>
<dbReference type="RefSeq" id="NP_626134.1">
    <property type="nucleotide sequence ID" value="NC_003888.3"/>
</dbReference>
<dbReference type="SMR" id="Q93RV9"/>
<dbReference type="STRING" id="100226.gene:17759464"/>
<dbReference type="PaxDb" id="100226-SCO1867"/>
<dbReference type="KEGG" id="sco:SCO1867"/>
<dbReference type="PATRIC" id="fig|100226.15.peg.1892"/>
<dbReference type="eggNOG" id="COG5285">
    <property type="taxonomic scope" value="Bacteria"/>
</dbReference>
<dbReference type="HOGENOM" id="CLU_048953_5_0_11"/>
<dbReference type="InParanoid" id="Q93RV9"/>
<dbReference type="OrthoDB" id="2573519at2"/>
<dbReference type="PhylomeDB" id="Q93RV9"/>
<dbReference type="Proteomes" id="UP000001973">
    <property type="component" value="Chromosome"/>
</dbReference>
<dbReference type="GO" id="GO:0016706">
    <property type="term" value="F:2-oxoglutarate-dependent dioxygenase activity"/>
    <property type="evidence" value="ECO:0000250"/>
    <property type="project" value="UniProtKB"/>
</dbReference>
<dbReference type="GO" id="GO:0005506">
    <property type="term" value="F:iron ion binding"/>
    <property type="evidence" value="ECO:0000250"/>
    <property type="project" value="UniProtKB"/>
</dbReference>
<dbReference type="GO" id="GO:0042400">
    <property type="term" value="P:ectoine catabolic process"/>
    <property type="evidence" value="ECO:0000250"/>
    <property type="project" value="UniProtKB"/>
</dbReference>
<dbReference type="FunFam" id="2.60.120.620:FF:000016">
    <property type="entry name" value="Ectoine hydroxylase"/>
    <property type="match status" value="1"/>
</dbReference>
<dbReference type="Gene3D" id="2.60.120.620">
    <property type="entry name" value="q2cbj1_9rhob like domain"/>
    <property type="match status" value="1"/>
</dbReference>
<dbReference type="InterPro" id="IPR012774">
    <property type="entry name" value="EctD"/>
</dbReference>
<dbReference type="InterPro" id="IPR008775">
    <property type="entry name" value="Phytyl_CoA_dOase-like"/>
</dbReference>
<dbReference type="NCBIfam" id="TIGR02408">
    <property type="entry name" value="ectoine_ThpD"/>
    <property type="match status" value="1"/>
</dbReference>
<dbReference type="PANTHER" id="PTHR20883:SF48">
    <property type="entry name" value="ECTOINE DIOXYGENASE"/>
    <property type="match status" value="1"/>
</dbReference>
<dbReference type="PANTHER" id="PTHR20883">
    <property type="entry name" value="PHYTANOYL-COA DIOXYGENASE DOMAIN CONTAINING 1"/>
    <property type="match status" value="1"/>
</dbReference>
<dbReference type="Pfam" id="PF05721">
    <property type="entry name" value="PhyH"/>
    <property type="match status" value="1"/>
</dbReference>
<dbReference type="SUPFAM" id="SSF51197">
    <property type="entry name" value="Clavaminate synthase-like"/>
    <property type="match status" value="1"/>
</dbReference>
<accession>Q93RV9</accession>
<organism>
    <name type="scientific">Streptomyces coelicolor (strain ATCC BAA-471 / A3(2) / M145)</name>
    <dbReference type="NCBI Taxonomy" id="100226"/>
    <lineage>
        <taxon>Bacteria</taxon>
        <taxon>Bacillati</taxon>
        <taxon>Actinomycetota</taxon>
        <taxon>Actinomycetes</taxon>
        <taxon>Kitasatosporales</taxon>
        <taxon>Streptomycetaceae</taxon>
        <taxon>Streptomyces</taxon>
        <taxon>Streptomyces albidoflavus group</taxon>
    </lineage>
</organism>
<name>ECTD_STRCO</name>
<protein>
    <recommendedName>
        <fullName evidence="5">Ectoine dioxygenase</fullName>
        <ecNumber evidence="4">1.14.11.55</ecNumber>
    </recommendedName>
    <alternativeName>
        <fullName evidence="5">Ectoine hydroxylase</fullName>
    </alternativeName>
</protein>
<keyword id="KW-0223">Dioxygenase</keyword>
<keyword id="KW-0903">Direct protein sequencing</keyword>
<keyword id="KW-0408">Iron</keyword>
<keyword id="KW-0479">Metal-binding</keyword>
<keyword id="KW-0560">Oxidoreductase</keyword>
<keyword id="KW-1185">Reference proteome</keyword>
<gene>
    <name evidence="5" type="primary">ectD</name>
    <name type="ordered locus">SCO1867</name>
    <name type="ORF">SCI39.14</name>
</gene>
<evidence type="ECO:0000250" key="1">
    <source>
        <dbReference type="UniProtKB" id="Q1GNW5"/>
    </source>
</evidence>
<evidence type="ECO:0000250" key="2">
    <source>
        <dbReference type="UniProtKB" id="Q2TDY4"/>
    </source>
</evidence>
<evidence type="ECO:0000256" key="3">
    <source>
        <dbReference type="SAM" id="MobiDB-lite"/>
    </source>
</evidence>
<evidence type="ECO:0000269" key="4">
    <source>
    </source>
</evidence>
<evidence type="ECO:0000303" key="5">
    <source>
    </source>
</evidence>
<evidence type="ECO:0000305" key="6"/>